<feature type="chain" id="PRO_0000356766" description="Large ribosomal subunit protein bL33">
    <location>
        <begin position="1"/>
        <end position="49"/>
    </location>
</feature>
<keyword id="KW-0687">Ribonucleoprotein</keyword>
<keyword id="KW-0689">Ribosomal protein</keyword>
<protein>
    <recommendedName>
        <fullName evidence="1">Large ribosomal subunit protein bL33</fullName>
    </recommendedName>
    <alternativeName>
        <fullName evidence="2">50S ribosomal protein L33</fullName>
    </alternativeName>
</protein>
<comment type="similarity">
    <text evidence="1">Belongs to the bacterial ribosomal protein bL33 family.</text>
</comment>
<dbReference type="EMBL" id="CP000702">
    <property type="protein sequence ID" value="ABQ46493.1"/>
    <property type="molecule type" value="Genomic_DNA"/>
</dbReference>
<dbReference type="RefSeq" id="WP_004081515.1">
    <property type="nucleotide sequence ID" value="NC_009486.1"/>
</dbReference>
<dbReference type="SMR" id="A5IJX0"/>
<dbReference type="STRING" id="390874.Tpet_0469"/>
<dbReference type="KEGG" id="tpt:Tpet_0469"/>
<dbReference type="eggNOG" id="COG0267">
    <property type="taxonomic scope" value="Bacteria"/>
</dbReference>
<dbReference type="HOGENOM" id="CLU_190949_0_1_0"/>
<dbReference type="Proteomes" id="UP000006558">
    <property type="component" value="Chromosome"/>
</dbReference>
<dbReference type="GO" id="GO:0005737">
    <property type="term" value="C:cytoplasm"/>
    <property type="evidence" value="ECO:0007669"/>
    <property type="project" value="UniProtKB-ARBA"/>
</dbReference>
<dbReference type="GO" id="GO:1990904">
    <property type="term" value="C:ribonucleoprotein complex"/>
    <property type="evidence" value="ECO:0007669"/>
    <property type="project" value="UniProtKB-KW"/>
</dbReference>
<dbReference type="GO" id="GO:0005840">
    <property type="term" value="C:ribosome"/>
    <property type="evidence" value="ECO:0007669"/>
    <property type="project" value="UniProtKB-KW"/>
</dbReference>
<dbReference type="GO" id="GO:0003735">
    <property type="term" value="F:structural constituent of ribosome"/>
    <property type="evidence" value="ECO:0007669"/>
    <property type="project" value="InterPro"/>
</dbReference>
<dbReference type="GO" id="GO:0006412">
    <property type="term" value="P:translation"/>
    <property type="evidence" value="ECO:0007669"/>
    <property type="project" value="UniProtKB-UniRule"/>
</dbReference>
<dbReference type="Gene3D" id="2.20.28.120">
    <property type="entry name" value="Ribosomal protein L33"/>
    <property type="match status" value="1"/>
</dbReference>
<dbReference type="HAMAP" id="MF_00294">
    <property type="entry name" value="Ribosomal_bL33"/>
    <property type="match status" value="1"/>
</dbReference>
<dbReference type="InterPro" id="IPR001705">
    <property type="entry name" value="Ribosomal_bL33"/>
</dbReference>
<dbReference type="InterPro" id="IPR018264">
    <property type="entry name" value="Ribosomal_bL33_CS"/>
</dbReference>
<dbReference type="InterPro" id="IPR038584">
    <property type="entry name" value="Ribosomal_bL33_sf"/>
</dbReference>
<dbReference type="InterPro" id="IPR011332">
    <property type="entry name" value="Ribosomal_zn-bd"/>
</dbReference>
<dbReference type="NCBIfam" id="NF001764">
    <property type="entry name" value="PRK00504.1"/>
    <property type="match status" value="1"/>
</dbReference>
<dbReference type="NCBIfam" id="NF001860">
    <property type="entry name" value="PRK00595.1"/>
    <property type="match status" value="1"/>
</dbReference>
<dbReference type="NCBIfam" id="TIGR01023">
    <property type="entry name" value="rpmG_bact"/>
    <property type="match status" value="1"/>
</dbReference>
<dbReference type="PANTHER" id="PTHR43168">
    <property type="entry name" value="50S RIBOSOMAL PROTEIN L33, CHLOROPLASTIC"/>
    <property type="match status" value="1"/>
</dbReference>
<dbReference type="PANTHER" id="PTHR43168:SF6">
    <property type="entry name" value="LARGE RIBOSOMAL SUBUNIT PROTEIN BL33A"/>
    <property type="match status" value="1"/>
</dbReference>
<dbReference type="Pfam" id="PF00471">
    <property type="entry name" value="Ribosomal_L33"/>
    <property type="match status" value="1"/>
</dbReference>
<dbReference type="SUPFAM" id="SSF57829">
    <property type="entry name" value="Zn-binding ribosomal proteins"/>
    <property type="match status" value="1"/>
</dbReference>
<dbReference type="PROSITE" id="PS00582">
    <property type="entry name" value="RIBOSOMAL_L33"/>
    <property type="match status" value="1"/>
</dbReference>
<gene>
    <name evidence="1" type="primary">rpmG</name>
    <name type="ordered locus">Tpet_0469</name>
</gene>
<name>RL33_THEP1</name>
<proteinExistence type="inferred from homology"/>
<evidence type="ECO:0000255" key="1">
    <source>
        <dbReference type="HAMAP-Rule" id="MF_00294"/>
    </source>
</evidence>
<evidence type="ECO:0000305" key="2"/>
<accession>A5IJX0</accession>
<reference key="1">
    <citation type="submission" date="2007-05" db="EMBL/GenBank/DDBJ databases">
        <title>Complete sequence of Thermotoga petrophila RKU-1.</title>
        <authorList>
            <consortium name="US DOE Joint Genome Institute"/>
            <person name="Copeland A."/>
            <person name="Lucas S."/>
            <person name="Lapidus A."/>
            <person name="Barry K."/>
            <person name="Glavina del Rio T."/>
            <person name="Dalin E."/>
            <person name="Tice H."/>
            <person name="Pitluck S."/>
            <person name="Sims D."/>
            <person name="Brettin T."/>
            <person name="Bruce D."/>
            <person name="Detter J.C."/>
            <person name="Han C."/>
            <person name="Tapia R."/>
            <person name="Schmutz J."/>
            <person name="Larimer F."/>
            <person name="Land M."/>
            <person name="Hauser L."/>
            <person name="Kyrpides N."/>
            <person name="Mikhailova N."/>
            <person name="Nelson K."/>
            <person name="Gogarten J.P."/>
            <person name="Noll K."/>
            <person name="Richardson P."/>
        </authorList>
    </citation>
    <scope>NUCLEOTIDE SEQUENCE [LARGE SCALE GENOMIC DNA]</scope>
    <source>
        <strain>ATCC BAA-488 / DSM 13995 / JCM 10881 / RKU-1</strain>
    </source>
</reference>
<sequence length="49" mass="5744">MRVKVALKCSQCGNKNYYTTRNKDKRAKLELRKYCPKCNAHTIHTETKA</sequence>
<organism>
    <name type="scientific">Thermotoga petrophila (strain ATCC BAA-488 / DSM 13995 / JCM 10881 / RKU-1)</name>
    <dbReference type="NCBI Taxonomy" id="390874"/>
    <lineage>
        <taxon>Bacteria</taxon>
        <taxon>Thermotogati</taxon>
        <taxon>Thermotogota</taxon>
        <taxon>Thermotogae</taxon>
        <taxon>Thermotogales</taxon>
        <taxon>Thermotogaceae</taxon>
        <taxon>Thermotoga</taxon>
    </lineage>
</organism>